<sequence>MNILRRGRLGNSIKEDVAKYTTSLSFDKEIFEADILCDIAHVIMLYEQGIIKKEDAKKIIEGLKEIYKKGMENLNLDPSLDDIHMVIESELIKKLGEDVAGRMHTGRSRNDEVATDLRIALREKVLIIAKSLIKMLKDILELAEKHKETLIVGYTHLQHAQPVTFAHHLLSYVSAIERDILRLLDAYKRINISPLGCGAMATTGFKINRERTKELLGFDALIENSMDGVSARDFILETMADLAILGTNLSKICEELILFSTYEFGTIEIANEFCSTSSIMPQKKNPDVAEIARAKLSKLNGNLVTALTILKALPNTYNRDLQEISPHLWDSVYTTIDTIKMVHGMLKTIKINKERMEELAKANYSTATELADTLVRETGIPFRTAHGIVGEVVRRSIEEKKDMIEVIYEVLEKYNLKVDEEKIKKALDPYENVKMRDVIGGPAPEEVEKRIKVFRERLDRYEKEVDEKLQKINKVKEILLSYEI</sequence>
<dbReference type="EC" id="4.3.2.1" evidence="1"/>
<dbReference type="EMBL" id="L77117">
    <property type="protein sequence ID" value="AAB98785.1"/>
    <property type="molecule type" value="Genomic_DNA"/>
</dbReference>
<dbReference type="PIR" id="G64398">
    <property type="entry name" value="G64398"/>
</dbReference>
<dbReference type="RefSeq" id="WP_010870298.1">
    <property type="nucleotide sequence ID" value="NC_000909.1"/>
</dbReference>
<dbReference type="SMR" id="Q58201"/>
<dbReference type="FunCoup" id="Q58201">
    <property type="interactions" value="215"/>
</dbReference>
<dbReference type="STRING" id="243232.MJ_0791"/>
<dbReference type="PaxDb" id="243232-MJ_0791"/>
<dbReference type="EnsemblBacteria" id="AAB98785">
    <property type="protein sequence ID" value="AAB98785"/>
    <property type="gene ID" value="MJ_0791"/>
</dbReference>
<dbReference type="GeneID" id="1451670"/>
<dbReference type="KEGG" id="mja:MJ_0791"/>
<dbReference type="eggNOG" id="arCOG01748">
    <property type="taxonomic scope" value="Archaea"/>
</dbReference>
<dbReference type="HOGENOM" id="CLU_027272_2_3_2"/>
<dbReference type="InParanoid" id="Q58201"/>
<dbReference type="OrthoDB" id="27337at2157"/>
<dbReference type="PhylomeDB" id="Q58201"/>
<dbReference type="UniPathway" id="UPA00068">
    <property type="reaction ID" value="UER00114"/>
</dbReference>
<dbReference type="Proteomes" id="UP000000805">
    <property type="component" value="Chromosome"/>
</dbReference>
<dbReference type="GO" id="GO:0005829">
    <property type="term" value="C:cytosol"/>
    <property type="evidence" value="ECO:0000318"/>
    <property type="project" value="GO_Central"/>
</dbReference>
<dbReference type="GO" id="GO:0004056">
    <property type="term" value="F:argininosuccinate lyase activity"/>
    <property type="evidence" value="ECO:0000318"/>
    <property type="project" value="GO_Central"/>
</dbReference>
<dbReference type="GO" id="GO:0042450">
    <property type="term" value="P:arginine biosynthetic process via ornithine"/>
    <property type="evidence" value="ECO:0000318"/>
    <property type="project" value="GO_Central"/>
</dbReference>
<dbReference type="GO" id="GO:0006526">
    <property type="term" value="P:L-arginine biosynthetic process"/>
    <property type="evidence" value="ECO:0007669"/>
    <property type="project" value="UniProtKB-UniRule"/>
</dbReference>
<dbReference type="CDD" id="cd01359">
    <property type="entry name" value="Argininosuccinate_lyase"/>
    <property type="match status" value="1"/>
</dbReference>
<dbReference type="FunFam" id="1.10.40.30:FF:000001">
    <property type="entry name" value="Argininosuccinate lyase"/>
    <property type="match status" value="1"/>
</dbReference>
<dbReference type="FunFam" id="1.20.200.10:FF:000015">
    <property type="entry name" value="argininosuccinate lyase isoform X2"/>
    <property type="match status" value="1"/>
</dbReference>
<dbReference type="Gene3D" id="1.10.40.30">
    <property type="entry name" value="Fumarase/aspartase (C-terminal domain)"/>
    <property type="match status" value="1"/>
</dbReference>
<dbReference type="Gene3D" id="1.20.200.10">
    <property type="entry name" value="Fumarase/aspartase (Central domain)"/>
    <property type="match status" value="1"/>
</dbReference>
<dbReference type="Gene3D" id="1.10.275.10">
    <property type="entry name" value="Fumarase/aspartase (N-terminal domain)"/>
    <property type="match status" value="1"/>
</dbReference>
<dbReference type="HAMAP" id="MF_00006">
    <property type="entry name" value="Arg_succ_lyase"/>
    <property type="match status" value="1"/>
</dbReference>
<dbReference type="InterPro" id="IPR029419">
    <property type="entry name" value="Arg_succ_lyase_C"/>
</dbReference>
<dbReference type="InterPro" id="IPR009049">
    <property type="entry name" value="Argininosuccinate_lyase"/>
</dbReference>
<dbReference type="InterPro" id="IPR024083">
    <property type="entry name" value="Fumarase/histidase_N"/>
</dbReference>
<dbReference type="InterPro" id="IPR000362">
    <property type="entry name" value="Fumarate_lyase_fam"/>
</dbReference>
<dbReference type="InterPro" id="IPR022761">
    <property type="entry name" value="Fumarate_lyase_N"/>
</dbReference>
<dbReference type="InterPro" id="IPR008948">
    <property type="entry name" value="L-Aspartase-like"/>
</dbReference>
<dbReference type="NCBIfam" id="TIGR00838">
    <property type="entry name" value="argH"/>
    <property type="match status" value="1"/>
</dbReference>
<dbReference type="PANTHER" id="PTHR43814">
    <property type="entry name" value="ARGININOSUCCINATE LYASE"/>
    <property type="match status" value="1"/>
</dbReference>
<dbReference type="PANTHER" id="PTHR43814:SF1">
    <property type="entry name" value="ARGININOSUCCINATE LYASE"/>
    <property type="match status" value="1"/>
</dbReference>
<dbReference type="Pfam" id="PF14698">
    <property type="entry name" value="ASL_C2"/>
    <property type="match status" value="1"/>
</dbReference>
<dbReference type="Pfam" id="PF00206">
    <property type="entry name" value="Lyase_1"/>
    <property type="match status" value="1"/>
</dbReference>
<dbReference type="PRINTS" id="PR00145">
    <property type="entry name" value="ARGSUCLYASE"/>
</dbReference>
<dbReference type="PRINTS" id="PR00149">
    <property type="entry name" value="FUMRATELYASE"/>
</dbReference>
<dbReference type="SUPFAM" id="SSF48557">
    <property type="entry name" value="L-aspartase-like"/>
    <property type="match status" value="1"/>
</dbReference>
<protein>
    <recommendedName>
        <fullName evidence="1">Argininosuccinate lyase</fullName>
        <shortName evidence="1">ASAL</shortName>
        <ecNumber evidence="1">4.3.2.1</ecNumber>
    </recommendedName>
    <alternativeName>
        <fullName evidence="1">Arginosuccinase</fullName>
    </alternativeName>
</protein>
<evidence type="ECO:0000255" key="1">
    <source>
        <dbReference type="HAMAP-Rule" id="MF_00006"/>
    </source>
</evidence>
<reference key="1">
    <citation type="journal article" date="1996" name="Science">
        <title>Complete genome sequence of the methanogenic archaeon, Methanococcus jannaschii.</title>
        <authorList>
            <person name="Bult C.J."/>
            <person name="White O."/>
            <person name="Olsen G.J."/>
            <person name="Zhou L."/>
            <person name="Fleischmann R.D."/>
            <person name="Sutton G.G."/>
            <person name="Blake J.A."/>
            <person name="FitzGerald L.M."/>
            <person name="Clayton R.A."/>
            <person name="Gocayne J.D."/>
            <person name="Kerlavage A.R."/>
            <person name="Dougherty B.A."/>
            <person name="Tomb J.-F."/>
            <person name="Adams M.D."/>
            <person name="Reich C.I."/>
            <person name="Overbeek R."/>
            <person name="Kirkness E.F."/>
            <person name="Weinstock K.G."/>
            <person name="Merrick J.M."/>
            <person name="Glodek A."/>
            <person name="Scott J.L."/>
            <person name="Geoghagen N.S.M."/>
            <person name="Weidman J.F."/>
            <person name="Fuhrmann J.L."/>
            <person name="Nguyen D."/>
            <person name="Utterback T.R."/>
            <person name="Kelley J.M."/>
            <person name="Peterson J.D."/>
            <person name="Sadow P.W."/>
            <person name="Hanna M.C."/>
            <person name="Cotton M.D."/>
            <person name="Roberts K.M."/>
            <person name="Hurst M.A."/>
            <person name="Kaine B.P."/>
            <person name="Borodovsky M."/>
            <person name="Klenk H.-P."/>
            <person name="Fraser C.M."/>
            <person name="Smith H.O."/>
            <person name="Woese C.R."/>
            <person name="Venter J.C."/>
        </authorList>
    </citation>
    <scope>NUCLEOTIDE SEQUENCE [LARGE SCALE GENOMIC DNA]</scope>
    <source>
        <strain>ATCC 43067 / DSM 2661 / JAL-1 / JCM 10045 / NBRC 100440</strain>
    </source>
</reference>
<feature type="chain" id="PRO_0000137862" description="Argininosuccinate lyase">
    <location>
        <begin position="1"/>
        <end position="484"/>
    </location>
</feature>
<keyword id="KW-0028">Amino-acid biosynthesis</keyword>
<keyword id="KW-0055">Arginine biosynthesis</keyword>
<keyword id="KW-0963">Cytoplasm</keyword>
<keyword id="KW-0456">Lyase</keyword>
<keyword id="KW-1185">Reference proteome</keyword>
<name>ARLY_METJA</name>
<comment type="catalytic activity">
    <reaction evidence="1">
        <text>2-(N(omega)-L-arginino)succinate = fumarate + L-arginine</text>
        <dbReference type="Rhea" id="RHEA:24020"/>
        <dbReference type="ChEBI" id="CHEBI:29806"/>
        <dbReference type="ChEBI" id="CHEBI:32682"/>
        <dbReference type="ChEBI" id="CHEBI:57472"/>
        <dbReference type="EC" id="4.3.2.1"/>
    </reaction>
</comment>
<comment type="pathway">
    <text evidence="1">Amino-acid biosynthesis; L-arginine biosynthesis; L-arginine from L-ornithine and carbamoyl phosphate: step 3/3.</text>
</comment>
<comment type="subcellular location">
    <subcellularLocation>
        <location evidence="1">Cytoplasm</location>
    </subcellularLocation>
</comment>
<comment type="similarity">
    <text evidence="1">Belongs to the lyase 1 family. Argininosuccinate lyase subfamily.</text>
</comment>
<organism>
    <name type="scientific">Methanocaldococcus jannaschii (strain ATCC 43067 / DSM 2661 / JAL-1 / JCM 10045 / NBRC 100440)</name>
    <name type="common">Methanococcus jannaschii</name>
    <dbReference type="NCBI Taxonomy" id="243232"/>
    <lineage>
        <taxon>Archaea</taxon>
        <taxon>Methanobacteriati</taxon>
        <taxon>Methanobacteriota</taxon>
        <taxon>Methanomada group</taxon>
        <taxon>Methanococci</taxon>
        <taxon>Methanococcales</taxon>
        <taxon>Methanocaldococcaceae</taxon>
        <taxon>Methanocaldococcus</taxon>
    </lineage>
</organism>
<gene>
    <name evidence="1" type="primary">argH</name>
    <name type="ordered locus">MJ0791</name>
</gene>
<proteinExistence type="inferred from homology"/>
<accession>Q58201</accession>